<keyword id="KW-0067">ATP-binding</keyword>
<keyword id="KW-0963">Cytoplasm</keyword>
<keyword id="KW-0418">Kinase</keyword>
<keyword id="KW-0520">NAD</keyword>
<keyword id="KW-0521">NADP</keyword>
<keyword id="KW-0547">Nucleotide-binding</keyword>
<keyword id="KW-1185">Reference proteome</keyword>
<keyword id="KW-0808">Transferase</keyword>
<feature type="chain" id="PRO_0000120644" description="NAD kinase">
    <location>
        <begin position="1"/>
        <end position="305"/>
    </location>
</feature>
<feature type="active site" description="Proton acceptor" evidence="1">
    <location>
        <position position="84"/>
    </location>
</feature>
<feature type="binding site" evidence="1">
    <location>
        <begin position="84"/>
        <end position="85"/>
    </location>
    <ligand>
        <name>NAD(+)</name>
        <dbReference type="ChEBI" id="CHEBI:57540"/>
    </ligand>
</feature>
<feature type="binding site" evidence="1">
    <location>
        <begin position="159"/>
        <end position="160"/>
    </location>
    <ligand>
        <name>NAD(+)</name>
        <dbReference type="ChEBI" id="CHEBI:57540"/>
    </ligand>
</feature>
<feature type="binding site" evidence="1">
    <location>
        <position position="170"/>
    </location>
    <ligand>
        <name>NAD(+)</name>
        <dbReference type="ChEBI" id="CHEBI:57540"/>
    </ligand>
</feature>
<feature type="binding site" evidence="1">
    <location>
        <position position="187"/>
    </location>
    <ligand>
        <name>NAD(+)</name>
        <dbReference type="ChEBI" id="CHEBI:57540"/>
    </ligand>
</feature>
<feature type="binding site" evidence="1">
    <location>
        <position position="189"/>
    </location>
    <ligand>
        <name>NAD(+)</name>
        <dbReference type="ChEBI" id="CHEBI:57540"/>
    </ligand>
</feature>
<feature type="binding site" evidence="1">
    <location>
        <begin position="200"/>
        <end position="205"/>
    </location>
    <ligand>
        <name>NAD(+)</name>
        <dbReference type="ChEBI" id="CHEBI:57540"/>
    </ligand>
</feature>
<feature type="binding site" evidence="1">
    <location>
        <position position="260"/>
    </location>
    <ligand>
        <name>NAD(+)</name>
        <dbReference type="ChEBI" id="CHEBI:57540"/>
    </ligand>
</feature>
<protein>
    <recommendedName>
        <fullName evidence="1">NAD kinase</fullName>
        <ecNumber evidence="1">2.7.1.23</ecNumber>
    </recommendedName>
    <alternativeName>
        <fullName evidence="1">ATP-dependent NAD kinase</fullName>
    </alternativeName>
</protein>
<reference key="1">
    <citation type="journal article" date="2001" name="Proc. Natl. Acad. Sci. U.S.A.">
        <title>Complete genomic sequence of Pasteurella multocida Pm70.</title>
        <authorList>
            <person name="May B.J."/>
            <person name="Zhang Q."/>
            <person name="Li L.L."/>
            <person name="Paustian M.L."/>
            <person name="Whittam T.S."/>
            <person name="Kapur V."/>
        </authorList>
    </citation>
    <scope>NUCLEOTIDE SEQUENCE [LARGE SCALE GENOMIC DNA]</scope>
    <source>
        <strain>Pm70</strain>
    </source>
</reference>
<accession>Q9CNU2</accession>
<dbReference type="EC" id="2.7.1.23" evidence="1"/>
<dbReference type="EMBL" id="AE004439">
    <property type="protein sequence ID" value="AAK02417.1"/>
    <property type="molecule type" value="Genomic_DNA"/>
</dbReference>
<dbReference type="RefSeq" id="WP_010906592.1">
    <property type="nucleotide sequence ID" value="NC_002663.1"/>
</dbReference>
<dbReference type="SMR" id="Q9CNU2"/>
<dbReference type="STRING" id="272843.PM0333"/>
<dbReference type="EnsemblBacteria" id="AAK02417">
    <property type="protein sequence ID" value="AAK02417"/>
    <property type="gene ID" value="PM0333"/>
</dbReference>
<dbReference type="KEGG" id="pmu:PM0333"/>
<dbReference type="HOGENOM" id="CLU_008831_0_1_6"/>
<dbReference type="OrthoDB" id="9774737at2"/>
<dbReference type="Proteomes" id="UP000000809">
    <property type="component" value="Chromosome"/>
</dbReference>
<dbReference type="GO" id="GO:0005737">
    <property type="term" value="C:cytoplasm"/>
    <property type="evidence" value="ECO:0007669"/>
    <property type="project" value="UniProtKB-SubCell"/>
</dbReference>
<dbReference type="GO" id="GO:0005524">
    <property type="term" value="F:ATP binding"/>
    <property type="evidence" value="ECO:0007669"/>
    <property type="project" value="UniProtKB-KW"/>
</dbReference>
<dbReference type="GO" id="GO:0046872">
    <property type="term" value="F:metal ion binding"/>
    <property type="evidence" value="ECO:0007669"/>
    <property type="project" value="UniProtKB-UniRule"/>
</dbReference>
<dbReference type="GO" id="GO:0051287">
    <property type="term" value="F:NAD binding"/>
    <property type="evidence" value="ECO:0007669"/>
    <property type="project" value="UniProtKB-ARBA"/>
</dbReference>
<dbReference type="GO" id="GO:0003951">
    <property type="term" value="F:NAD+ kinase activity"/>
    <property type="evidence" value="ECO:0007669"/>
    <property type="project" value="UniProtKB-UniRule"/>
</dbReference>
<dbReference type="GO" id="GO:0019674">
    <property type="term" value="P:NAD metabolic process"/>
    <property type="evidence" value="ECO:0007669"/>
    <property type="project" value="InterPro"/>
</dbReference>
<dbReference type="GO" id="GO:0006741">
    <property type="term" value="P:NADP biosynthetic process"/>
    <property type="evidence" value="ECO:0007669"/>
    <property type="project" value="UniProtKB-UniRule"/>
</dbReference>
<dbReference type="FunFam" id="2.60.200.30:FF:000001">
    <property type="entry name" value="NAD kinase"/>
    <property type="match status" value="1"/>
</dbReference>
<dbReference type="Gene3D" id="3.40.50.10330">
    <property type="entry name" value="Probable inorganic polyphosphate/atp-NAD kinase, domain 1"/>
    <property type="match status" value="1"/>
</dbReference>
<dbReference type="Gene3D" id="2.60.200.30">
    <property type="entry name" value="Probable inorganic polyphosphate/atp-NAD kinase, domain 2"/>
    <property type="match status" value="1"/>
</dbReference>
<dbReference type="HAMAP" id="MF_00361">
    <property type="entry name" value="NAD_kinase"/>
    <property type="match status" value="1"/>
</dbReference>
<dbReference type="InterPro" id="IPR017438">
    <property type="entry name" value="ATP-NAD_kinase_N"/>
</dbReference>
<dbReference type="InterPro" id="IPR017437">
    <property type="entry name" value="ATP-NAD_kinase_PpnK-typ_C"/>
</dbReference>
<dbReference type="InterPro" id="IPR016064">
    <property type="entry name" value="NAD/diacylglycerol_kinase_sf"/>
</dbReference>
<dbReference type="InterPro" id="IPR002504">
    <property type="entry name" value="NADK"/>
</dbReference>
<dbReference type="NCBIfam" id="NF002306">
    <property type="entry name" value="PRK01231.1"/>
    <property type="match status" value="1"/>
</dbReference>
<dbReference type="NCBIfam" id="NF002579">
    <property type="entry name" value="PRK02231.1"/>
    <property type="match status" value="1"/>
</dbReference>
<dbReference type="NCBIfam" id="NF002893">
    <property type="entry name" value="PRK03378.1"/>
    <property type="match status" value="1"/>
</dbReference>
<dbReference type="PANTHER" id="PTHR20275">
    <property type="entry name" value="NAD KINASE"/>
    <property type="match status" value="1"/>
</dbReference>
<dbReference type="PANTHER" id="PTHR20275:SF0">
    <property type="entry name" value="NAD KINASE"/>
    <property type="match status" value="1"/>
</dbReference>
<dbReference type="Pfam" id="PF01513">
    <property type="entry name" value="NAD_kinase"/>
    <property type="match status" value="1"/>
</dbReference>
<dbReference type="Pfam" id="PF20143">
    <property type="entry name" value="NAD_kinase_C"/>
    <property type="match status" value="1"/>
</dbReference>
<dbReference type="SUPFAM" id="SSF111331">
    <property type="entry name" value="NAD kinase/diacylglycerol kinase-like"/>
    <property type="match status" value="1"/>
</dbReference>
<sequence>MKHPNTIDIKALQSSFQIIGLLGKPRHDVTLQMHKNLFQWLLEKGYQVLVERPIGEQLGLSENYLASVDEIGQQAQLAIVIGGDGNVLGRARTLAKYDIALIGINRGNLGFLTDIDPKNAYSQLQACLEDGDCFVEERFILEASVERNGKIIARGNAVNEAVVHPAKIAHMIDFHVYINDKFAFSQRSDGLIISTPTGSTAYSLSAGGPILTPQLNAIALVPMFPHTLSSRPLVIDGDSKISIRFAEYNTSQLEVGCDSQVALEFSPDDIVHIQKSPDKLRLLHLKNYNYYKVLSSKLGWLRNSV</sequence>
<comment type="function">
    <text evidence="1">Involved in the regulation of the intracellular balance of NAD and NADP, and is a key enzyme in the biosynthesis of NADP. Catalyzes specifically the phosphorylation on 2'-hydroxyl of the adenosine moiety of NAD to yield NADP.</text>
</comment>
<comment type="catalytic activity">
    <reaction evidence="1">
        <text>NAD(+) + ATP = ADP + NADP(+) + H(+)</text>
        <dbReference type="Rhea" id="RHEA:18629"/>
        <dbReference type="ChEBI" id="CHEBI:15378"/>
        <dbReference type="ChEBI" id="CHEBI:30616"/>
        <dbReference type="ChEBI" id="CHEBI:57540"/>
        <dbReference type="ChEBI" id="CHEBI:58349"/>
        <dbReference type="ChEBI" id="CHEBI:456216"/>
        <dbReference type="EC" id="2.7.1.23"/>
    </reaction>
</comment>
<comment type="cofactor">
    <cofactor evidence="1">
        <name>a divalent metal cation</name>
        <dbReference type="ChEBI" id="CHEBI:60240"/>
    </cofactor>
</comment>
<comment type="subcellular location">
    <subcellularLocation>
        <location evidence="1">Cytoplasm</location>
    </subcellularLocation>
</comment>
<comment type="similarity">
    <text evidence="1">Belongs to the NAD kinase family.</text>
</comment>
<name>NADK_PASMU</name>
<gene>
    <name evidence="1" type="primary">nadK</name>
    <name type="ordered locus">PM0333</name>
</gene>
<proteinExistence type="inferred from homology"/>
<evidence type="ECO:0000255" key="1">
    <source>
        <dbReference type="HAMAP-Rule" id="MF_00361"/>
    </source>
</evidence>
<organism>
    <name type="scientific">Pasteurella multocida (strain Pm70)</name>
    <dbReference type="NCBI Taxonomy" id="272843"/>
    <lineage>
        <taxon>Bacteria</taxon>
        <taxon>Pseudomonadati</taxon>
        <taxon>Pseudomonadota</taxon>
        <taxon>Gammaproteobacteria</taxon>
        <taxon>Pasteurellales</taxon>
        <taxon>Pasteurellaceae</taxon>
        <taxon>Pasteurella</taxon>
    </lineage>
</organism>